<dbReference type="EMBL" id="Y14081">
    <property type="protein sequence ID" value="CAA74463.1"/>
    <property type="molecule type" value="Genomic_DNA"/>
</dbReference>
<dbReference type="EMBL" id="AL009126">
    <property type="protein sequence ID" value="CAB12884.1"/>
    <property type="molecule type" value="Genomic_DNA"/>
</dbReference>
<dbReference type="PIR" id="A69833">
    <property type="entry name" value="A69833"/>
</dbReference>
<dbReference type="RefSeq" id="NP_388925.1">
    <property type="nucleotide sequence ID" value="NC_000964.3"/>
</dbReference>
<dbReference type="RefSeq" id="WP_003233136.1">
    <property type="nucleotide sequence ID" value="NZ_OZ025638.1"/>
</dbReference>
<dbReference type="FunCoup" id="O07555">
    <property type="interactions" value="10"/>
</dbReference>
<dbReference type="STRING" id="224308.BSU10440"/>
<dbReference type="PaxDb" id="224308-BSU10440"/>
<dbReference type="EnsemblBacteria" id="CAB12884">
    <property type="protein sequence ID" value="CAB12884"/>
    <property type="gene ID" value="BSU_10440"/>
</dbReference>
<dbReference type="GeneID" id="936321"/>
<dbReference type="KEGG" id="bsu:BSU10440"/>
<dbReference type="PATRIC" id="fig|224308.179.peg.1123"/>
<dbReference type="eggNOG" id="ENOG5032ZVS">
    <property type="taxonomic scope" value="Bacteria"/>
</dbReference>
<dbReference type="InParanoid" id="O07555"/>
<dbReference type="OrthoDB" id="2735480at2"/>
<dbReference type="BioCyc" id="BSUB:BSU10440-MONOMER"/>
<dbReference type="Proteomes" id="UP000001570">
    <property type="component" value="Chromosome"/>
</dbReference>
<dbReference type="InterPro" id="IPR008613">
    <property type="entry name" value="Excalibur_Ca-bd_domain"/>
</dbReference>
<dbReference type="Pfam" id="PF05901">
    <property type="entry name" value="Excalibur"/>
    <property type="match status" value="1"/>
</dbReference>
<dbReference type="SMART" id="SM00894">
    <property type="entry name" value="Excalibur"/>
    <property type="match status" value="1"/>
</dbReference>
<evidence type="ECO:0000255" key="1"/>
<organism>
    <name type="scientific">Bacillus subtilis (strain 168)</name>
    <dbReference type="NCBI Taxonomy" id="224308"/>
    <lineage>
        <taxon>Bacteria</taxon>
        <taxon>Bacillati</taxon>
        <taxon>Bacillota</taxon>
        <taxon>Bacilli</taxon>
        <taxon>Bacillales</taxon>
        <taxon>Bacillaceae</taxon>
        <taxon>Bacillus</taxon>
    </lineage>
</organism>
<feature type="signal peptide" evidence="1">
    <location>
        <begin position="1"/>
        <end position="27"/>
    </location>
</feature>
<feature type="chain" id="PRO_0000013702" description="Uncharacterized protein YhjA">
    <location>
        <begin position="28"/>
        <end position="89"/>
    </location>
</feature>
<gene>
    <name type="primary">yhjA</name>
    <name type="ordered locus">BSU10440</name>
</gene>
<name>YHJA_BACSU</name>
<reference key="1">
    <citation type="journal article" date="1998" name="Microbiology">
        <title>The 172 kb prkA-addAB region from 83 degrees to 97 degrees of the Bacillus subtilis chromosome contains several dysfunctional genes, the glyB marker, many genes encoding transporter proteins, and the ubiquitous hit gene.</title>
        <authorList>
            <person name="Noback M.A."/>
            <person name="Holsappel S."/>
            <person name="Kiewiet R."/>
            <person name="Terpstra P."/>
            <person name="Wambutt R."/>
            <person name="Wedler H."/>
            <person name="Venema G."/>
            <person name="Bron S."/>
        </authorList>
    </citation>
    <scope>NUCLEOTIDE SEQUENCE [GENOMIC DNA]</scope>
    <source>
        <strain>168</strain>
    </source>
</reference>
<reference key="2">
    <citation type="journal article" date="1997" name="Nature">
        <title>The complete genome sequence of the Gram-positive bacterium Bacillus subtilis.</title>
        <authorList>
            <person name="Kunst F."/>
            <person name="Ogasawara N."/>
            <person name="Moszer I."/>
            <person name="Albertini A.M."/>
            <person name="Alloni G."/>
            <person name="Azevedo V."/>
            <person name="Bertero M.G."/>
            <person name="Bessieres P."/>
            <person name="Bolotin A."/>
            <person name="Borchert S."/>
            <person name="Borriss R."/>
            <person name="Boursier L."/>
            <person name="Brans A."/>
            <person name="Braun M."/>
            <person name="Brignell S.C."/>
            <person name="Bron S."/>
            <person name="Brouillet S."/>
            <person name="Bruschi C.V."/>
            <person name="Caldwell B."/>
            <person name="Capuano V."/>
            <person name="Carter N.M."/>
            <person name="Choi S.-K."/>
            <person name="Codani J.-J."/>
            <person name="Connerton I.F."/>
            <person name="Cummings N.J."/>
            <person name="Daniel R.A."/>
            <person name="Denizot F."/>
            <person name="Devine K.M."/>
            <person name="Duesterhoeft A."/>
            <person name="Ehrlich S.D."/>
            <person name="Emmerson P.T."/>
            <person name="Entian K.-D."/>
            <person name="Errington J."/>
            <person name="Fabret C."/>
            <person name="Ferrari E."/>
            <person name="Foulger D."/>
            <person name="Fritz C."/>
            <person name="Fujita M."/>
            <person name="Fujita Y."/>
            <person name="Fuma S."/>
            <person name="Galizzi A."/>
            <person name="Galleron N."/>
            <person name="Ghim S.-Y."/>
            <person name="Glaser P."/>
            <person name="Goffeau A."/>
            <person name="Golightly E.J."/>
            <person name="Grandi G."/>
            <person name="Guiseppi G."/>
            <person name="Guy B.J."/>
            <person name="Haga K."/>
            <person name="Haiech J."/>
            <person name="Harwood C.R."/>
            <person name="Henaut A."/>
            <person name="Hilbert H."/>
            <person name="Holsappel S."/>
            <person name="Hosono S."/>
            <person name="Hullo M.-F."/>
            <person name="Itaya M."/>
            <person name="Jones L.-M."/>
            <person name="Joris B."/>
            <person name="Karamata D."/>
            <person name="Kasahara Y."/>
            <person name="Klaerr-Blanchard M."/>
            <person name="Klein C."/>
            <person name="Kobayashi Y."/>
            <person name="Koetter P."/>
            <person name="Koningstein G."/>
            <person name="Krogh S."/>
            <person name="Kumano M."/>
            <person name="Kurita K."/>
            <person name="Lapidus A."/>
            <person name="Lardinois S."/>
            <person name="Lauber J."/>
            <person name="Lazarevic V."/>
            <person name="Lee S.-M."/>
            <person name="Levine A."/>
            <person name="Liu H."/>
            <person name="Masuda S."/>
            <person name="Mauel C."/>
            <person name="Medigue C."/>
            <person name="Medina N."/>
            <person name="Mellado R.P."/>
            <person name="Mizuno M."/>
            <person name="Moestl D."/>
            <person name="Nakai S."/>
            <person name="Noback M."/>
            <person name="Noone D."/>
            <person name="O'Reilly M."/>
            <person name="Ogawa K."/>
            <person name="Ogiwara A."/>
            <person name="Oudega B."/>
            <person name="Park S.-H."/>
            <person name="Parro V."/>
            <person name="Pohl T.M."/>
            <person name="Portetelle D."/>
            <person name="Porwollik S."/>
            <person name="Prescott A.M."/>
            <person name="Presecan E."/>
            <person name="Pujic P."/>
            <person name="Purnelle B."/>
            <person name="Rapoport G."/>
            <person name="Rey M."/>
            <person name="Reynolds S."/>
            <person name="Rieger M."/>
            <person name="Rivolta C."/>
            <person name="Rocha E."/>
            <person name="Roche B."/>
            <person name="Rose M."/>
            <person name="Sadaie Y."/>
            <person name="Sato T."/>
            <person name="Scanlan E."/>
            <person name="Schleich S."/>
            <person name="Schroeter R."/>
            <person name="Scoffone F."/>
            <person name="Sekiguchi J."/>
            <person name="Sekowska A."/>
            <person name="Seror S.J."/>
            <person name="Serror P."/>
            <person name="Shin B.-S."/>
            <person name="Soldo B."/>
            <person name="Sorokin A."/>
            <person name="Tacconi E."/>
            <person name="Takagi T."/>
            <person name="Takahashi H."/>
            <person name="Takemaru K."/>
            <person name="Takeuchi M."/>
            <person name="Tamakoshi A."/>
            <person name="Tanaka T."/>
            <person name="Terpstra P."/>
            <person name="Tognoni A."/>
            <person name="Tosato V."/>
            <person name="Uchiyama S."/>
            <person name="Vandenbol M."/>
            <person name="Vannier F."/>
            <person name="Vassarotti A."/>
            <person name="Viari A."/>
            <person name="Wambutt R."/>
            <person name="Wedler E."/>
            <person name="Wedler H."/>
            <person name="Weitzenegger T."/>
            <person name="Winters P."/>
            <person name="Wipat A."/>
            <person name="Yamamoto H."/>
            <person name="Yamane K."/>
            <person name="Yasumoto K."/>
            <person name="Yata K."/>
            <person name="Yoshida K."/>
            <person name="Yoshikawa H.-F."/>
            <person name="Zumstein E."/>
            <person name="Yoshikawa H."/>
            <person name="Danchin A."/>
        </authorList>
    </citation>
    <scope>NUCLEOTIDE SEQUENCE [LARGE SCALE GENOMIC DNA]</scope>
    <source>
        <strain>168</strain>
    </source>
</reference>
<accession>O07555</accession>
<keyword id="KW-1185">Reference proteome</keyword>
<keyword id="KW-0732">Signal</keyword>
<protein>
    <recommendedName>
        <fullName>Uncharacterized protein YhjA</fullName>
    </recommendedName>
</protein>
<proteinExistence type="inferred from homology"/>
<sequence length="89" mass="9802">MKKAAAVLLSLGLVFGFSYGAGHVAEAKTKVKVYKNCKELNKVYKGGVARTSKVKNKGGKTKYKPYVSKALYDANKNKDRDKDLIACER</sequence>